<accession>Q1J8X0</accession>
<comment type="function">
    <text evidence="1">DNA-dependent RNA polymerase catalyzes the transcription of DNA into RNA using the four ribonucleoside triphosphates as substrates.</text>
</comment>
<comment type="catalytic activity">
    <reaction evidence="1">
        <text>RNA(n) + a ribonucleoside 5'-triphosphate = RNA(n+1) + diphosphate</text>
        <dbReference type="Rhea" id="RHEA:21248"/>
        <dbReference type="Rhea" id="RHEA-COMP:14527"/>
        <dbReference type="Rhea" id="RHEA-COMP:17342"/>
        <dbReference type="ChEBI" id="CHEBI:33019"/>
        <dbReference type="ChEBI" id="CHEBI:61557"/>
        <dbReference type="ChEBI" id="CHEBI:140395"/>
        <dbReference type="EC" id="2.7.7.6"/>
    </reaction>
</comment>
<comment type="cofactor">
    <cofactor evidence="1">
        <name>Mg(2+)</name>
        <dbReference type="ChEBI" id="CHEBI:18420"/>
    </cofactor>
    <text evidence="1">Binds 1 Mg(2+) ion per subunit.</text>
</comment>
<comment type="cofactor">
    <cofactor evidence="1">
        <name>Zn(2+)</name>
        <dbReference type="ChEBI" id="CHEBI:29105"/>
    </cofactor>
    <text evidence="1">Binds 2 Zn(2+) ions per subunit.</text>
</comment>
<comment type="subunit">
    <text evidence="1">The RNAP catalytic core consists of 2 alpha, 1 beta, 1 beta' and 1 omega subunit. When a sigma factor is associated with the core the holoenzyme is formed, which can initiate transcription.</text>
</comment>
<comment type="similarity">
    <text evidence="1">Belongs to the RNA polymerase beta' chain family.</text>
</comment>
<keyword id="KW-0240">DNA-directed RNA polymerase</keyword>
<keyword id="KW-0460">Magnesium</keyword>
<keyword id="KW-0479">Metal-binding</keyword>
<keyword id="KW-0548">Nucleotidyltransferase</keyword>
<keyword id="KW-0804">Transcription</keyword>
<keyword id="KW-0808">Transferase</keyword>
<keyword id="KW-0862">Zinc</keyword>
<gene>
    <name evidence="1" type="primary">rpoC</name>
    <name type="ordered locus">MGAS10750_Spy0091</name>
</gene>
<protein>
    <recommendedName>
        <fullName evidence="1">DNA-directed RNA polymerase subunit beta'</fullName>
        <shortName evidence="1">RNAP subunit beta'</shortName>
        <ecNumber evidence="1">2.7.7.6</ecNumber>
    </recommendedName>
    <alternativeName>
        <fullName evidence="1">RNA polymerase subunit beta'</fullName>
    </alternativeName>
    <alternativeName>
        <fullName evidence="1">Transcriptase subunit beta'</fullName>
    </alternativeName>
</protein>
<name>RPOC_STRPF</name>
<organism>
    <name type="scientific">Streptococcus pyogenes serotype M4 (strain MGAS10750)</name>
    <dbReference type="NCBI Taxonomy" id="370554"/>
    <lineage>
        <taxon>Bacteria</taxon>
        <taxon>Bacillati</taxon>
        <taxon>Bacillota</taxon>
        <taxon>Bacilli</taxon>
        <taxon>Lactobacillales</taxon>
        <taxon>Streptococcaceae</taxon>
        <taxon>Streptococcus</taxon>
    </lineage>
</organism>
<sequence>MVDVNRFKSMQITLASPSKVRSWSYGEVKKPETINYRTLKPEREGLFDEVIFGPTKDWECACGKYKRIRYKGIVCDRCGVEVTRAKVRRERMGHIELKAPVSHIWYFKGIPSRMGLTLDMSPRALEEVIYFAAYVVIDPKDTPLEPKSLLTEREYREKLQEYGHGSFVAKMGAEAIQDLLKRVDLAAEIAELKEELKSASGQKRIKAVRRLDVLDAFNKSGNKPEWMVLNILPVIPPDLRPMVQLDGGRFAASDLNDLYRRVINRNNRLARLLELNAPGIIVQNEKRMLQEAVDALIDNGRRGRPITGPGSRPLKSLSHMLKGKQGRFRQNLLGKRVDFSGRSVIAVGPTLKMYQCGVPREMAIELFKPFVMREIVAKEYAGNVKAAKRMVERGDERIWDILEEVIKEHPVLLNRAPTLHRLGIQAFEPVLIDGKALRLHPLVCEAYNADFDGDQMAIHVPLSEEAQAEARLLMLAAEHILNPKDGKPVVTPSQDMVLGNYYLTMEDAGREGEGMIFKDKDEAVMAYRNGYAHLHSRVGIAVDSMPNKPWKDSQRHKIMVTTVGKILFNDIMPEDLPYLQEPNNANLTEGTPDKYFLEPGQDIQEVIDGLEINVPFKKKNLGNIIAETFKRFRTTETSAFLDRLKDLGYYHSTLAGLTVGIADIPVIDNKAEIIDAAHHRVEEINKAFRRGLMTDDDRYVAVTTTWREAKEALEKRLIETQDPKNPIVMMMDSGARGNISNFSQLAGMRGLMAAPNGRIMELPILSNFREGLSVLEMFFSTHGARKGMTDTALKTADSGYLTRRLVDVAQDVIIREDDCGTDRGLLIRAITDGKEVTETLEERLQGRYTRKSVKHPETGEVLIGADQLITEDMARKIVDAGVEEVTIRSVFTCATRHGVCRHCYGINLATGDAVEVGEAVGTIAAQSIGEPGTQLTMRTFHTGGVASNTDITQGLPRIQEIFEARNPKGEAVITEVKGNVVEIEEDASTRTKKVYVQGKTGMGEYVVPFTARMKVEVGDEVNRGAALTEGSIQPKRLLEVRDTLSVETYLLAEVQKVYRSQGVEIGDKHVEVMVRQMLRKVRVMDPGDTDLLPGTLMDISDFTDANKDIVISGGIPATSRPVLMGITKASLETNSFLSAASFQETTRVLTDAAIRGKKDHLLGLKENVIIGKIIPAGTGMARYRNIEPQAMNEIEVIDHTEVSAEAVFTAEAE</sequence>
<feature type="chain" id="PRO_0000308887" description="DNA-directed RNA polymerase subunit beta'">
    <location>
        <begin position="1"/>
        <end position="1213"/>
    </location>
</feature>
<feature type="binding site" evidence="1">
    <location>
        <position position="60"/>
    </location>
    <ligand>
        <name>Zn(2+)</name>
        <dbReference type="ChEBI" id="CHEBI:29105"/>
        <label>1</label>
    </ligand>
</feature>
<feature type="binding site" evidence="1">
    <location>
        <position position="62"/>
    </location>
    <ligand>
        <name>Zn(2+)</name>
        <dbReference type="ChEBI" id="CHEBI:29105"/>
        <label>1</label>
    </ligand>
</feature>
<feature type="binding site" evidence="1">
    <location>
        <position position="75"/>
    </location>
    <ligand>
        <name>Zn(2+)</name>
        <dbReference type="ChEBI" id="CHEBI:29105"/>
        <label>1</label>
    </ligand>
</feature>
<feature type="binding site" evidence="1">
    <location>
        <position position="78"/>
    </location>
    <ligand>
        <name>Zn(2+)</name>
        <dbReference type="ChEBI" id="CHEBI:29105"/>
        <label>1</label>
    </ligand>
</feature>
<feature type="binding site" evidence="1">
    <location>
        <position position="450"/>
    </location>
    <ligand>
        <name>Mg(2+)</name>
        <dbReference type="ChEBI" id="CHEBI:18420"/>
    </ligand>
</feature>
<feature type="binding site" evidence="1">
    <location>
        <position position="452"/>
    </location>
    <ligand>
        <name>Mg(2+)</name>
        <dbReference type="ChEBI" id="CHEBI:18420"/>
    </ligand>
</feature>
<feature type="binding site" evidence="1">
    <location>
        <position position="454"/>
    </location>
    <ligand>
        <name>Mg(2+)</name>
        <dbReference type="ChEBI" id="CHEBI:18420"/>
    </ligand>
</feature>
<feature type="binding site" evidence="1">
    <location>
        <position position="819"/>
    </location>
    <ligand>
        <name>Zn(2+)</name>
        <dbReference type="ChEBI" id="CHEBI:29105"/>
        <label>2</label>
    </ligand>
</feature>
<feature type="binding site" evidence="1">
    <location>
        <position position="893"/>
    </location>
    <ligand>
        <name>Zn(2+)</name>
        <dbReference type="ChEBI" id="CHEBI:29105"/>
        <label>2</label>
    </ligand>
</feature>
<feature type="binding site" evidence="1">
    <location>
        <position position="900"/>
    </location>
    <ligand>
        <name>Zn(2+)</name>
        <dbReference type="ChEBI" id="CHEBI:29105"/>
        <label>2</label>
    </ligand>
</feature>
<feature type="binding site" evidence="1">
    <location>
        <position position="903"/>
    </location>
    <ligand>
        <name>Zn(2+)</name>
        <dbReference type="ChEBI" id="CHEBI:29105"/>
        <label>2</label>
    </ligand>
</feature>
<proteinExistence type="inferred from homology"/>
<reference key="1">
    <citation type="journal article" date="2006" name="Proc. Natl. Acad. Sci. U.S.A.">
        <title>Molecular genetic anatomy of inter- and intraserotype variation in the human bacterial pathogen group A Streptococcus.</title>
        <authorList>
            <person name="Beres S.B."/>
            <person name="Richter E.W."/>
            <person name="Nagiec M.J."/>
            <person name="Sumby P."/>
            <person name="Porcella S.F."/>
            <person name="DeLeo F.R."/>
            <person name="Musser J.M."/>
        </authorList>
    </citation>
    <scope>NUCLEOTIDE SEQUENCE [LARGE SCALE GENOMIC DNA]</scope>
    <source>
        <strain>MGAS10750</strain>
    </source>
</reference>
<dbReference type="EC" id="2.7.7.6" evidence="1"/>
<dbReference type="EMBL" id="CP000262">
    <property type="protein sequence ID" value="ABF37041.1"/>
    <property type="molecule type" value="Genomic_DNA"/>
</dbReference>
<dbReference type="SMR" id="Q1J8X0"/>
<dbReference type="KEGG" id="spi:MGAS10750_Spy0091"/>
<dbReference type="HOGENOM" id="CLU_000524_3_1_9"/>
<dbReference type="Proteomes" id="UP000002434">
    <property type="component" value="Chromosome"/>
</dbReference>
<dbReference type="GO" id="GO:0000428">
    <property type="term" value="C:DNA-directed RNA polymerase complex"/>
    <property type="evidence" value="ECO:0007669"/>
    <property type="project" value="UniProtKB-KW"/>
</dbReference>
<dbReference type="GO" id="GO:0003677">
    <property type="term" value="F:DNA binding"/>
    <property type="evidence" value="ECO:0007669"/>
    <property type="project" value="UniProtKB-UniRule"/>
</dbReference>
<dbReference type="GO" id="GO:0003899">
    <property type="term" value="F:DNA-directed RNA polymerase activity"/>
    <property type="evidence" value="ECO:0007669"/>
    <property type="project" value="UniProtKB-UniRule"/>
</dbReference>
<dbReference type="GO" id="GO:0000287">
    <property type="term" value="F:magnesium ion binding"/>
    <property type="evidence" value="ECO:0007669"/>
    <property type="project" value="UniProtKB-UniRule"/>
</dbReference>
<dbReference type="GO" id="GO:0008270">
    <property type="term" value="F:zinc ion binding"/>
    <property type="evidence" value="ECO:0007669"/>
    <property type="project" value="UniProtKB-UniRule"/>
</dbReference>
<dbReference type="GO" id="GO:0006351">
    <property type="term" value="P:DNA-templated transcription"/>
    <property type="evidence" value="ECO:0007669"/>
    <property type="project" value="UniProtKB-UniRule"/>
</dbReference>
<dbReference type="CDD" id="cd02655">
    <property type="entry name" value="RNAP_beta'_C"/>
    <property type="match status" value="1"/>
</dbReference>
<dbReference type="CDD" id="cd01609">
    <property type="entry name" value="RNAP_beta'_N"/>
    <property type="match status" value="1"/>
</dbReference>
<dbReference type="FunFam" id="1.10.150.390:FF:000002">
    <property type="entry name" value="DNA-directed RNA polymerase subunit beta"/>
    <property type="match status" value="1"/>
</dbReference>
<dbReference type="FunFam" id="4.10.860.120:FF:000001">
    <property type="entry name" value="DNA-directed RNA polymerase subunit beta"/>
    <property type="match status" value="1"/>
</dbReference>
<dbReference type="Gene3D" id="1.10.132.30">
    <property type="match status" value="1"/>
</dbReference>
<dbReference type="Gene3D" id="1.10.150.390">
    <property type="match status" value="1"/>
</dbReference>
<dbReference type="Gene3D" id="1.10.1790.20">
    <property type="match status" value="1"/>
</dbReference>
<dbReference type="Gene3D" id="1.10.40.90">
    <property type="match status" value="1"/>
</dbReference>
<dbReference type="Gene3D" id="2.40.40.20">
    <property type="match status" value="1"/>
</dbReference>
<dbReference type="Gene3D" id="2.40.50.100">
    <property type="match status" value="1"/>
</dbReference>
<dbReference type="Gene3D" id="4.10.860.120">
    <property type="entry name" value="RNA polymerase II, clamp domain"/>
    <property type="match status" value="1"/>
</dbReference>
<dbReference type="Gene3D" id="1.10.274.100">
    <property type="entry name" value="RNA polymerase Rpb1, domain 3"/>
    <property type="match status" value="2"/>
</dbReference>
<dbReference type="HAMAP" id="MF_01322">
    <property type="entry name" value="RNApol_bact_RpoC"/>
    <property type="match status" value="1"/>
</dbReference>
<dbReference type="InterPro" id="IPR045867">
    <property type="entry name" value="DNA-dir_RpoC_beta_prime"/>
</dbReference>
<dbReference type="InterPro" id="IPR012754">
    <property type="entry name" value="DNA-dir_RpoC_beta_prime_bact"/>
</dbReference>
<dbReference type="InterPro" id="IPR000722">
    <property type="entry name" value="RNA_pol_asu"/>
</dbReference>
<dbReference type="InterPro" id="IPR006592">
    <property type="entry name" value="RNA_pol_N"/>
</dbReference>
<dbReference type="InterPro" id="IPR007080">
    <property type="entry name" value="RNA_pol_Rpb1_1"/>
</dbReference>
<dbReference type="InterPro" id="IPR007066">
    <property type="entry name" value="RNA_pol_Rpb1_3"/>
</dbReference>
<dbReference type="InterPro" id="IPR042102">
    <property type="entry name" value="RNA_pol_Rpb1_3_sf"/>
</dbReference>
<dbReference type="InterPro" id="IPR007083">
    <property type="entry name" value="RNA_pol_Rpb1_4"/>
</dbReference>
<dbReference type="InterPro" id="IPR007081">
    <property type="entry name" value="RNA_pol_Rpb1_5"/>
</dbReference>
<dbReference type="InterPro" id="IPR044893">
    <property type="entry name" value="RNA_pol_Rpb1_clamp_domain"/>
</dbReference>
<dbReference type="InterPro" id="IPR038120">
    <property type="entry name" value="Rpb1_funnel_sf"/>
</dbReference>
<dbReference type="NCBIfam" id="TIGR02386">
    <property type="entry name" value="rpoC_TIGR"/>
    <property type="match status" value="1"/>
</dbReference>
<dbReference type="PANTHER" id="PTHR19376">
    <property type="entry name" value="DNA-DIRECTED RNA POLYMERASE"/>
    <property type="match status" value="1"/>
</dbReference>
<dbReference type="PANTHER" id="PTHR19376:SF54">
    <property type="entry name" value="DNA-DIRECTED RNA POLYMERASE SUBUNIT BETA"/>
    <property type="match status" value="1"/>
</dbReference>
<dbReference type="Pfam" id="PF04997">
    <property type="entry name" value="RNA_pol_Rpb1_1"/>
    <property type="match status" value="1"/>
</dbReference>
<dbReference type="Pfam" id="PF00623">
    <property type="entry name" value="RNA_pol_Rpb1_2"/>
    <property type="match status" value="2"/>
</dbReference>
<dbReference type="Pfam" id="PF04983">
    <property type="entry name" value="RNA_pol_Rpb1_3"/>
    <property type="match status" value="1"/>
</dbReference>
<dbReference type="Pfam" id="PF05000">
    <property type="entry name" value="RNA_pol_Rpb1_4"/>
    <property type="match status" value="1"/>
</dbReference>
<dbReference type="Pfam" id="PF04998">
    <property type="entry name" value="RNA_pol_Rpb1_5"/>
    <property type="match status" value="1"/>
</dbReference>
<dbReference type="SMART" id="SM00663">
    <property type="entry name" value="RPOLA_N"/>
    <property type="match status" value="1"/>
</dbReference>
<dbReference type="SUPFAM" id="SSF64484">
    <property type="entry name" value="beta and beta-prime subunits of DNA dependent RNA-polymerase"/>
    <property type="match status" value="1"/>
</dbReference>
<evidence type="ECO:0000255" key="1">
    <source>
        <dbReference type="HAMAP-Rule" id="MF_01322"/>
    </source>
</evidence>